<reference key="1">
    <citation type="submission" date="2006-03" db="EMBL/GenBank/DDBJ databases">
        <title>Complete sequence of Rhodopseudomonas palustris BisB18.</title>
        <authorList>
            <consortium name="US DOE Joint Genome Institute"/>
            <person name="Copeland A."/>
            <person name="Lucas S."/>
            <person name="Lapidus A."/>
            <person name="Barry K."/>
            <person name="Detter J.C."/>
            <person name="Glavina del Rio T."/>
            <person name="Hammon N."/>
            <person name="Israni S."/>
            <person name="Dalin E."/>
            <person name="Tice H."/>
            <person name="Pitluck S."/>
            <person name="Chain P."/>
            <person name="Malfatti S."/>
            <person name="Shin M."/>
            <person name="Vergez L."/>
            <person name="Schmutz J."/>
            <person name="Larimer F."/>
            <person name="Land M."/>
            <person name="Hauser L."/>
            <person name="Pelletier D.A."/>
            <person name="Kyrpides N."/>
            <person name="Anderson I."/>
            <person name="Oda Y."/>
            <person name="Harwood C.S."/>
            <person name="Richardson P."/>
        </authorList>
    </citation>
    <scope>NUCLEOTIDE SEQUENCE [LARGE SCALE GENOMIC DNA]</scope>
    <source>
        <strain>BisB18</strain>
    </source>
</reference>
<protein>
    <recommendedName>
        <fullName evidence="1">DNA-directed RNA polymerase subunit alpha</fullName>
        <shortName evidence="1">RNAP subunit alpha</shortName>
        <ecNumber evidence="1">2.7.7.6</ecNumber>
    </recommendedName>
    <alternativeName>
        <fullName evidence="1">RNA polymerase subunit alpha</fullName>
    </alternativeName>
    <alternativeName>
        <fullName evidence="1">Transcriptase subunit alpha</fullName>
    </alternativeName>
</protein>
<dbReference type="EC" id="2.7.7.6" evidence="1"/>
<dbReference type="EMBL" id="CP000301">
    <property type="protein sequence ID" value="ABD88964.1"/>
    <property type="molecule type" value="Genomic_DNA"/>
</dbReference>
<dbReference type="SMR" id="Q211H2"/>
<dbReference type="STRING" id="316056.RPC_3424"/>
<dbReference type="KEGG" id="rpc:RPC_3424"/>
<dbReference type="eggNOG" id="COG0202">
    <property type="taxonomic scope" value="Bacteria"/>
</dbReference>
<dbReference type="HOGENOM" id="CLU_053084_0_0_5"/>
<dbReference type="GO" id="GO:0005737">
    <property type="term" value="C:cytoplasm"/>
    <property type="evidence" value="ECO:0007669"/>
    <property type="project" value="UniProtKB-ARBA"/>
</dbReference>
<dbReference type="GO" id="GO:0000428">
    <property type="term" value="C:DNA-directed RNA polymerase complex"/>
    <property type="evidence" value="ECO:0007669"/>
    <property type="project" value="UniProtKB-KW"/>
</dbReference>
<dbReference type="GO" id="GO:0003677">
    <property type="term" value="F:DNA binding"/>
    <property type="evidence" value="ECO:0007669"/>
    <property type="project" value="UniProtKB-UniRule"/>
</dbReference>
<dbReference type="GO" id="GO:0003899">
    <property type="term" value="F:DNA-directed RNA polymerase activity"/>
    <property type="evidence" value="ECO:0007669"/>
    <property type="project" value="UniProtKB-UniRule"/>
</dbReference>
<dbReference type="GO" id="GO:0046983">
    <property type="term" value="F:protein dimerization activity"/>
    <property type="evidence" value="ECO:0007669"/>
    <property type="project" value="InterPro"/>
</dbReference>
<dbReference type="GO" id="GO:0006351">
    <property type="term" value="P:DNA-templated transcription"/>
    <property type="evidence" value="ECO:0007669"/>
    <property type="project" value="UniProtKB-UniRule"/>
</dbReference>
<dbReference type="CDD" id="cd06928">
    <property type="entry name" value="RNAP_alpha_NTD"/>
    <property type="match status" value="1"/>
</dbReference>
<dbReference type="FunFam" id="1.10.150.20:FF:000001">
    <property type="entry name" value="DNA-directed RNA polymerase subunit alpha"/>
    <property type="match status" value="1"/>
</dbReference>
<dbReference type="FunFam" id="2.170.120.12:FF:000001">
    <property type="entry name" value="DNA-directed RNA polymerase subunit alpha"/>
    <property type="match status" value="1"/>
</dbReference>
<dbReference type="Gene3D" id="1.10.150.20">
    <property type="entry name" value="5' to 3' exonuclease, C-terminal subdomain"/>
    <property type="match status" value="1"/>
</dbReference>
<dbReference type="Gene3D" id="2.170.120.12">
    <property type="entry name" value="DNA-directed RNA polymerase, insert domain"/>
    <property type="match status" value="1"/>
</dbReference>
<dbReference type="Gene3D" id="3.30.1360.10">
    <property type="entry name" value="RNA polymerase, RBP11-like subunit"/>
    <property type="match status" value="1"/>
</dbReference>
<dbReference type="HAMAP" id="MF_00059">
    <property type="entry name" value="RNApol_bact_RpoA"/>
    <property type="match status" value="1"/>
</dbReference>
<dbReference type="InterPro" id="IPR011262">
    <property type="entry name" value="DNA-dir_RNA_pol_insert"/>
</dbReference>
<dbReference type="InterPro" id="IPR011263">
    <property type="entry name" value="DNA-dir_RNA_pol_RpoA/D/Rpb3"/>
</dbReference>
<dbReference type="InterPro" id="IPR011773">
    <property type="entry name" value="DNA-dir_RpoA"/>
</dbReference>
<dbReference type="InterPro" id="IPR036603">
    <property type="entry name" value="RBP11-like"/>
</dbReference>
<dbReference type="InterPro" id="IPR011260">
    <property type="entry name" value="RNAP_asu_C"/>
</dbReference>
<dbReference type="InterPro" id="IPR036643">
    <property type="entry name" value="RNApol_insert_sf"/>
</dbReference>
<dbReference type="NCBIfam" id="NF003513">
    <property type="entry name" value="PRK05182.1-2"/>
    <property type="match status" value="1"/>
</dbReference>
<dbReference type="NCBIfam" id="NF003519">
    <property type="entry name" value="PRK05182.2-5"/>
    <property type="match status" value="1"/>
</dbReference>
<dbReference type="NCBIfam" id="TIGR02027">
    <property type="entry name" value="rpoA"/>
    <property type="match status" value="1"/>
</dbReference>
<dbReference type="Pfam" id="PF01000">
    <property type="entry name" value="RNA_pol_A_bac"/>
    <property type="match status" value="1"/>
</dbReference>
<dbReference type="Pfam" id="PF03118">
    <property type="entry name" value="RNA_pol_A_CTD"/>
    <property type="match status" value="1"/>
</dbReference>
<dbReference type="Pfam" id="PF01193">
    <property type="entry name" value="RNA_pol_L"/>
    <property type="match status" value="1"/>
</dbReference>
<dbReference type="SMART" id="SM00662">
    <property type="entry name" value="RPOLD"/>
    <property type="match status" value="1"/>
</dbReference>
<dbReference type="SUPFAM" id="SSF47789">
    <property type="entry name" value="C-terminal domain of RNA polymerase alpha subunit"/>
    <property type="match status" value="1"/>
</dbReference>
<dbReference type="SUPFAM" id="SSF56553">
    <property type="entry name" value="Insert subdomain of RNA polymerase alpha subunit"/>
    <property type="match status" value="1"/>
</dbReference>
<dbReference type="SUPFAM" id="SSF55257">
    <property type="entry name" value="RBP11-like subunits of RNA polymerase"/>
    <property type="match status" value="1"/>
</dbReference>
<keyword id="KW-0240">DNA-directed RNA polymerase</keyword>
<keyword id="KW-0548">Nucleotidyltransferase</keyword>
<keyword id="KW-0804">Transcription</keyword>
<keyword id="KW-0808">Transferase</keyword>
<sequence>MTIQKNWQELIRPNKLVVTPGSDPTRFATLVAEPLERGFGQTLGNALRRVLLSSLQGAAVQSVHIDGVLHEFSSIAGVREDVTDIVLNIKDISIKMQGEGPKRMVVKKQGPGTVTAGDIQTVGDVVVLNPDLQICTLDEGAEIRMEFTVAGGKGYVAAERNRPEDAPIGLIPVDSLFSPVRKVSYKVENTREGQILDYDKLTMTIETNGAISPDDAVAYAARILQDQLNVFVNFEEPRKEVTQEIIPDLAFNPAFLKKVDELELSVRSANCLKNDNIVYIGDLVQKSEAEMLRTPNFGRKSLNEIKEVLAQMGLHLGMEVPGWPPENIDELAKRFEDHY</sequence>
<evidence type="ECO:0000255" key="1">
    <source>
        <dbReference type="HAMAP-Rule" id="MF_00059"/>
    </source>
</evidence>
<comment type="function">
    <text evidence="1">DNA-dependent RNA polymerase catalyzes the transcription of DNA into RNA using the four ribonucleoside triphosphates as substrates.</text>
</comment>
<comment type="catalytic activity">
    <reaction evidence="1">
        <text>RNA(n) + a ribonucleoside 5'-triphosphate = RNA(n+1) + diphosphate</text>
        <dbReference type="Rhea" id="RHEA:21248"/>
        <dbReference type="Rhea" id="RHEA-COMP:14527"/>
        <dbReference type="Rhea" id="RHEA-COMP:17342"/>
        <dbReference type="ChEBI" id="CHEBI:33019"/>
        <dbReference type="ChEBI" id="CHEBI:61557"/>
        <dbReference type="ChEBI" id="CHEBI:140395"/>
        <dbReference type="EC" id="2.7.7.6"/>
    </reaction>
</comment>
<comment type="subunit">
    <text evidence="1">Homodimer. The RNAP catalytic core consists of 2 alpha, 1 beta, 1 beta' and 1 omega subunit. When a sigma factor is associated with the core the holoenzyme is formed, which can initiate transcription.</text>
</comment>
<comment type="domain">
    <text evidence="1">The N-terminal domain is essential for RNAP assembly and basal transcription, whereas the C-terminal domain is involved in interaction with transcriptional regulators and with upstream promoter elements.</text>
</comment>
<comment type="similarity">
    <text evidence="1">Belongs to the RNA polymerase alpha chain family.</text>
</comment>
<name>RPOA_RHOPB</name>
<gene>
    <name evidence="1" type="primary">rpoA</name>
    <name type="ordered locus">RPC_3424</name>
</gene>
<accession>Q211H2</accession>
<proteinExistence type="inferred from homology"/>
<feature type="chain" id="PRO_0000264534" description="DNA-directed RNA polymerase subunit alpha">
    <location>
        <begin position="1"/>
        <end position="339"/>
    </location>
</feature>
<feature type="region of interest" description="Alpha N-terminal domain (alpha-NTD)" evidence="1">
    <location>
        <begin position="1"/>
        <end position="235"/>
    </location>
</feature>
<feature type="region of interest" description="Alpha C-terminal domain (alpha-CTD)" evidence="1">
    <location>
        <begin position="251"/>
        <end position="339"/>
    </location>
</feature>
<organism>
    <name type="scientific">Rhodopseudomonas palustris (strain BisB18)</name>
    <dbReference type="NCBI Taxonomy" id="316056"/>
    <lineage>
        <taxon>Bacteria</taxon>
        <taxon>Pseudomonadati</taxon>
        <taxon>Pseudomonadota</taxon>
        <taxon>Alphaproteobacteria</taxon>
        <taxon>Hyphomicrobiales</taxon>
        <taxon>Nitrobacteraceae</taxon>
        <taxon>Rhodopseudomonas</taxon>
    </lineage>
</organism>